<feature type="chain" id="PRO_0000405250" description="Double homeobox protein 4-like protein 2">
    <location>
        <begin position="1"/>
        <end position="424"/>
    </location>
</feature>
<feature type="DNA-binding region" description="Homeobox 1" evidence="2">
    <location>
        <begin position="19"/>
        <end position="78"/>
    </location>
</feature>
<feature type="DNA-binding region" description="Homeobox 2" evidence="2">
    <location>
        <begin position="94"/>
        <end position="153"/>
    </location>
</feature>
<feature type="region of interest" description="Disordered" evidence="3">
    <location>
        <begin position="1"/>
        <end position="24"/>
    </location>
</feature>
<feature type="region of interest" description="Disordered" evidence="3">
    <location>
        <begin position="72"/>
        <end position="102"/>
    </location>
</feature>
<feature type="region of interest" description="Disordered" evidence="3">
    <location>
        <begin position="148"/>
        <end position="167"/>
    </location>
</feature>
<feature type="region of interest" description="Disordered" evidence="3">
    <location>
        <begin position="218"/>
        <end position="362"/>
    </location>
</feature>
<feature type="region of interest" description="Disordered" evidence="3">
    <location>
        <begin position="388"/>
        <end position="414"/>
    </location>
</feature>
<feature type="compositionally biased region" description="Polar residues" evidence="3">
    <location>
        <begin position="1"/>
        <end position="10"/>
    </location>
</feature>
<feature type="compositionally biased region" description="Basic and acidic residues" evidence="3">
    <location>
        <begin position="265"/>
        <end position="274"/>
    </location>
</feature>
<feature type="compositionally biased region" description="Low complexity" evidence="3">
    <location>
        <begin position="278"/>
        <end position="302"/>
    </location>
</feature>
<feature type="compositionally biased region" description="Low complexity" evidence="3">
    <location>
        <begin position="319"/>
        <end position="329"/>
    </location>
</feature>
<feature type="helix" evidence="4">
    <location>
        <begin position="28"/>
        <end position="40"/>
    </location>
</feature>
<feature type="helix" evidence="4">
    <location>
        <begin position="46"/>
        <end position="56"/>
    </location>
</feature>
<feature type="helix" evidence="4">
    <location>
        <begin position="60"/>
        <end position="81"/>
    </location>
</feature>
<feature type="helix" evidence="4">
    <location>
        <begin position="103"/>
        <end position="115"/>
    </location>
</feature>
<feature type="helix" evidence="4">
    <location>
        <begin position="121"/>
        <end position="131"/>
    </location>
</feature>
<feature type="helix" evidence="4">
    <location>
        <begin position="135"/>
        <end position="148"/>
    </location>
</feature>
<comment type="function">
    <text evidence="1">May be involved in transcriptional regulation.</text>
</comment>
<comment type="subcellular location">
    <subcellularLocation>
        <location evidence="2">Nucleus</location>
    </subcellularLocation>
</comment>
<sequence length="424" mass="44926">MALPTPSDSTLPAEARGRGRRRRLVWTPSQSEALRACFERNPYPGIATRERLAQAIGIPEPRVQIWFQNERSRQLRQHRRESRPWPGRRGPPEGRRKRTAVTGSQTALLLRAFEKDRFPGIAAREELARETGLPESRIQIWFQNRRARHPGQGGRAPAQAGGLCSAAPGGGHPAPSWVAFAHTGAWGTGLPAPHVPCAPGALPQGAFVSQAARAAPALQPSQAAPAEGVSQPAPARGDFAYAAPAPPDGALSHPQAPRWPPHPGKSREDRDPQRDGLPGPCAVAQPGPAQAGPQGQGVLAPPTSQGSPWWGWGRGPQVAGAAWEPQAGAAPPPQPAPPDASASARQGQMQGIPAPSQALQEPAPWSALPCGLLLDELLASPEFLQQAQPLLETEAPGELEASEEAASLEAPLSEEEYRALLEEL</sequence>
<gene>
    <name type="primary">DUX4L2</name>
</gene>
<accession>P0CJ85</accession>
<keyword id="KW-0002">3D-structure</keyword>
<keyword id="KW-0238">DNA-binding</keyword>
<keyword id="KW-0371">Homeobox</keyword>
<keyword id="KW-0539">Nucleus</keyword>
<keyword id="KW-1185">Reference proteome</keyword>
<keyword id="KW-0677">Repeat</keyword>
<keyword id="KW-0804">Transcription</keyword>
<keyword id="KW-0805">Transcription regulation</keyword>
<evidence type="ECO:0000250" key="1"/>
<evidence type="ECO:0000255" key="2">
    <source>
        <dbReference type="PROSITE-ProRule" id="PRU00108"/>
    </source>
</evidence>
<evidence type="ECO:0000256" key="3">
    <source>
        <dbReference type="SAM" id="MobiDB-lite"/>
    </source>
</evidence>
<evidence type="ECO:0007829" key="4">
    <source>
        <dbReference type="PDB" id="7DW5"/>
    </source>
</evidence>
<proteinExistence type="evidence at protein level"/>
<name>DU4L2_HUMAN</name>
<protein>
    <recommendedName>
        <fullName>Double homeobox protein 4-like protein 2</fullName>
    </recommendedName>
</protein>
<dbReference type="EMBL" id="AC126281">
    <property type="status" value="NOT_ANNOTATED_CDS"/>
    <property type="molecule type" value="Genomic_DNA"/>
</dbReference>
<dbReference type="PDB" id="7DW5">
    <property type="method" value="X-ray"/>
    <property type="resolution" value="2.83 A"/>
    <property type="chains" value="A/B=1-150"/>
</dbReference>
<dbReference type="PDBsum" id="7DW5"/>
<dbReference type="SMR" id="P0CJ85"/>
<dbReference type="FunCoup" id="P0CJ85">
    <property type="interactions" value="16"/>
</dbReference>
<dbReference type="IntAct" id="P0CJ85">
    <property type="interactions" value="1"/>
</dbReference>
<dbReference type="STRING" id="9606.ENSP00000458065"/>
<dbReference type="GlyGen" id="P0CJ85">
    <property type="glycosylation" value="1 site"/>
</dbReference>
<dbReference type="iPTMnet" id="P0CJ85"/>
<dbReference type="PhosphoSitePlus" id="P0CJ85"/>
<dbReference type="BioMuta" id="HGNC:37267"/>
<dbReference type="DMDM" id="325530032"/>
<dbReference type="MassIVE" id="P0CJ85"/>
<dbReference type="PaxDb" id="9606-ENSP00000451087"/>
<dbReference type="PeptideAtlas" id="P0CJ85"/>
<dbReference type="AGR" id="HGNC:37267"/>
<dbReference type="GeneCards" id="DUX4L2"/>
<dbReference type="HGNC" id="HGNC:37267">
    <property type="gene designation" value="DUX4L2"/>
</dbReference>
<dbReference type="neXtProt" id="NX_P0CJ85"/>
<dbReference type="eggNOG" id="KOG0849">
    <property type="taxonomic scope" value="Eukaryota"/>
</dbReference>
<dbReference type="InParanoid" id="P0CJ85"/>
<dbReference type="PAN-GO" id="P0CJ85">
    <property type="GO annotations" value="4 GO annotations based on evolutionary models"/>
</dbReference>
<dbReference type="PhylomeDB" id="P0CJ85"/>
<dbReference type="Pharos" id="P0CJ85">
    <property type="development level" value="Tdark"/>
</dbReference>
<dbReference type="PRO" id="PR:P0CJ85"/>
<dbReference type="Proteomes" id="UP000005640">
    <property type="component" value="Unplaced"/>
</dbReference>
<dbReference type="RNAct" id="P0CJ85">
    <property type="molecule type" value="protein"/>
</dbReference>
<dbReference type="GO" id="GO:0000785">
    <property type="term" value="C:chromatin"/>
    <property type="evidence" value="ECO:0000247"/>
    <property type="project" value="NTNU_SB"/>
</dbReference>
<dbReference type="GO" id="GO:0005634">
    <property type="term" value="C:nucleus"/>
    <property type="evidence" value="ECO:0000318"/>
    <property type="project" value="GO_Central"/>
</dbReference>
<dbReference type="GO" id="GO:0000981">
    <property type="term" value="F:DNA-binding transcription factor activity, RNA polymerase II-specific"/>
    <property type="evidence" value="ECO:0000247"/>
    <property type="project" value="NTNU_SB"/>
</dbReference>
<dbReference type="GO" id="GO:0000977">
    <property type="term" value="F:RNA polymerase II transcription regulatory region sequence-specific DNA binding"/>
    <property type="evidence" value="ECO:0000318"/>
    <property type="project" value="GO_Central"/>
</dbReference>
<dbReference type="GO" id="GO:0006357">
    <property type="term" value="P:regulation of transcription by RNA polymerase II"/>
    <property type="evidence" value="ECO:0000318"/>
    <property type="project" value="GO_Central"/>
</dbReference>
<dbReference type="CDD" id="cd00086">
    <property type="entry name" value="homeodomain"/>
    <property type="match status" value="2"/>
</dbReference>
<dbReference type="FunFam" id="1.10.10.60:FF:000325">
    <property type="entry name" value="Double homeobox protein 4"/>
    <property type="match status" value="1"/>
</dbReference>
<dbReference type="FunFam" id="1.10.10.60:FF:000354">
    <property type="entry name" value="Double homeobox protein 4"/>
    <property type="match status" value="1"/>
</dbReference>
<dbReference type="Gene3D" id="1.10.10.60">
    <property type="entry name" value="Homeodomain-like"/>
    <property type="match status" value="2"/>
</dbReference>
<dbReference type="InterPro" id="IPR001356">
    <property type="entry name" value="HD"/>
</dbReference>
<dbReference type="InterPro" id="IPR051306">
    <property type="entry name" value="Homeobox_regulator"/>
</dbReference>
<dbReference type="InterPro" id="IPR009057">
    <property type="entry name" value="Homeodomain-like_sf"/>
</dbReference>
<dbReference type="InterPro" id="IPR000047">
    <property type="entry name" value="HTH_motif"/>
</dbReference>
<dbReference type="PANTHER" id="PTHR46123:SF3">
    <property type="entry name" value="DOUBLE HOMEOBOX PROTEIN 1-RELATED"/>
    <property type="match status" value="1"/>
</dbReference>
<dbReference type="PANTHER" id="PTHR46123">
    <property type="entry name" value="MIX-TYPE HOMEOBOX GENE 1-RELATED"/>
    <property type="match status" value="1"/>
</dbReference>
<dbReference type="Pfam" id="PF00046">
    <property type="entry name" value="Homeodomain"/>
    <property type="match status" value="2"/>
</dbReference>
<dbReference type="PRINTS" id="PR00031">
    <property type="entry name" value="HTHREPRESSR"/>
</dbReference>
<dbReference type="SMART" id="SM00389">
    <property type="entry name" value="HOX"/>
    <property type="match status" value="2"/>
</dbReference>
<dbReference type="SUPFAM" id="SSF46689">
    <property type="entry name" value="Homeodomain-like"/>
    <property type="match status" value="2"/>
</dbReference>
<dbReference type="PROSITE" id="PS50071">
    <property type="entry name" value="HOMEOBOX_2"/>
    <property type="match status" value="2"/>
</dbReference>
<organism>
    <name type="scientific">Homo sapiens</name>
    <name type="common">Human</name>
    <dbReference type="NCBI Taxonomy" id="9606"/>
    <lineage>
        <taxon>Eukaryota</taxon>
        <taxon>Metazoa</taxon>
        <taxon>Chordata</taxon>
        <taxon>Craniata</taxon>
        <taxon>Vertebrata</taxon>
        <taxon>Euteleostomi</taxon>
        <taxon>Mammalia</taxon>
        <taxon>Eutheria</taxon>
        <taxon>Euarchontoglires</taxon>
        <taxon>Primates</taxon>
        <taxon>Haplorrhini</taxon>
        <taxon>Catarrhini</taxon>
        <taxon>Hominidae</taxon>
        <taxon>Homo</taxon>
    </lineage>
</organism>
<reference key="1">
    <citation type="journal article" date="2005" name="Nature">
        <title>Generation and annotation of the DNA sequences of human chromosomes 2 and 4.</title>
        <authorList>
            <person name="Hillier L.W."/>
            <person name="Graves T.A."/>
            <person name="Fulton R.S."/>
            <person name="Fulton L.A."/>
            <person name="Pepin K.H."/>
            <person name="Minx P."/>
            <person name="Wagner-McPherson C."/>
            <person name="Layman D."/>
            <person name="Wylie K."/>
            <person name="Sekhon M."/>
            <person name="Becker M.C."/>
            <person name="Fewell G.A."/>
            <person name="Delehaunty K.D."/>
            <person name="Miner T.L."/>
            <person name="Nash W.E."/>
            <person name="Kremitzki C."/>
            <person name="Oddy L."/>
            <person name="Du H."/>
            <person name="Sun H."/>
            <person name="Bradshaw-Cordum H."/>
            <person name="Ali J."/>
            <person name="Carter J."/>
            <person name="Cordes M."/>
            <person name="Harris A."/>
            <person name="Isak A."/>
            <person name="van Brunt A."/>
            <person name="Nguyen C."/>
            <person name="Du F."/>
            <person name="Courtney L."/>
            <person name="Kalicki J."/>
            <person name="Ozersky P."/>
            <person name="Abbott S."/>
            <person name="Armstrong J."/>
            <person name="Belter E.A."/>
            <person name="Caruso L."/>
            <person name="Cedroni M."/>
            <person name="Cotton M."/>
            <person name="Davidson T."/>
            <person name="Desai A."/>
            <person name="Elliott G."/>
            <person name="Erb T."/>
            <person name="Fronick C."/>
            <person name="Gaige T."/>
            <person name="Haakenson W."/>
            <person name="Haglund K."/>
            <person name="Holmes A."/>
            <person name="Harkins R."/>
            <person name="Kim K."/>
            <person name="Kruchowski S.S."/>
            <person name="Strong C.M."/>
            <person name="Grewal N."/>
            <person name="Goyea E."/>
            <person name="Hou S."/>
            <person name="Levy A."/>
            <person name="Martinka S."/>
            <person name="Mead K."/>
            <person name="McLellan M.D."/>
            <person name="Meyer R."/>
            <person name="Randall-Maher J."/>
            <person name="Tomlinson C."/>
            <person name="Dauphin-Kohlberg S."/>
            <person name="Kozlowicz-Reilly A."/>
            <person name="Shah N."/>
            <person name="Swearengen-Shahid S."/>
            <person name="Snider J."/>
            <person name="Strong J.T."/>
            <person name="Thompson J."/>
            <person name="Yoakum M."/>
            <person name="Leonard S."/>
            <person name="Pearman C."/>
            <person name="Trani L."/>
            <person name="Radionenko M."/>
            <person name="Waligorski J.E."/>
            <person name="Wang C."/>
            <person name="Rock S.M."/>
            <person name="Tin-Wollam A.-M."/>
            <person name="Maupin R."/>
            <person name="Latreille P."/>
            <person name="Wendl M.C."/>
            <person name="Yang S.-P."/>
            <person name="Pohl C."/>
            <person name="Wallis J.W."/>
            <person name="Spieth J."/>
            <person name="Bieri T.A."/>
            <person name="Berkowicz N."/>
            <person name="Nelson J.O."/>
            <person name="Osborne J."/>
            <person name="Ding L."/>
            <person name="Meyer R."/>
            <person name="Sabo A."/>
            <person name="Shotland Y."/>
            <person name="Sinha P."/>
            <person name="Wohldmann P.E."/>
            <person name="Cook L.L."/>
            <person name="Hickenbotham M.T."/>
            <person name="Eldred J."/>
            <person name="Williams D."/>
            <person name="Jones T.A."/>
            <person name="She X."/>
            <person name="Ciccarelli F.D."/>
            <person name="Izaurralde E."/>
            <person name="Taylor J."/>
            <person name="Schmutz J."/>
            <person name="Myers R.M."/>
            <person name="Cox D.R."/>
            <person name="Huang X."/>
            <person name="McPherson J.D."/>
            <person name="Mardis E.R."/>
            <person name="Clifton S.W."/>
            <person name="Warren W.C."/>
            <person name="Chinwalla A.T."/>
            <person name="Eddy S.R."/>
            <person name="Marra M.A."/>
            <person name="Ovcharenko I."/>
            <person name="Furey T.S."/>
            <person name="Miller W."/>
            <person name="Eichler E.E."/>
            <person name="Bork P."/>
            <person name="Suyama M."/>
            <person name="Torrents D."/>
            <person name="Waterston R.H."/>
            <person name="Wilson R.K."/>
        </authorList>
    </citation>
    <scope>NUCLEOTIDE SEQUENCE [LARGE SCALE GENOMIC DNA]</scope>
</reference>